<gene>
    <name evidence="1" type="primary">rnhB</name>
    <name type="ordered locus">MAV_3757</name>
</gene>
<evidence type="ECO:0000255" key="1">
    <source>
        <dbReference type="HAMAP-Rule" id="MF_00052"/>
    </source>
</evidence>
<evidence type="ECO:0000255" key="2">
    <source>
        <dbReference type="PROSITE-ProRule" id="PRU01319"/>
    </source>
</evidence>
<proteinExistence type="inferred from homology"/>
<comment type="function">
    <text evidence="1">Endonuclease that specifically degrades the RNA of RNA-DNA hybrids.</text>
</comment>
<comment type="catalytic activity">
    <reaction evidence="1">
        <text>Endonucleolytic cleavage to 5'-phosphomonoester.</text>
        <dbReference type="EC" id="3.1.26.4"/>
    </reaction>
</comment>
<comment type="cofactor">
    <cofactor evidence="1">
        <name>Mn(2+)</name>
        <dbReference type="ChEBI" id="CHEBI:29035"/>
    </cofactor>
    <cofactor evidence="1">
        <name>Mg(2+)</name>
        <dbReference type="ChEBI" id="CHEBI:18420"/>
    </cofactor>
    <text evidence="1">Manganese or magnesium. Binds 1 divalent metal ion per monomer in the absence of substrate. May bind a second metal ion after substrate binding.</text>
</comment>
<comment type="subcellular location">
    <subcellularLocation>
        <location evidence="1">Cytoplasm</location>
    </subcellularLocation>
</comment>
<comment type="similarity">
    <text evidence="1">Belongs to the RNase HII family.</text>
</comment>
<keyword id="KW-0963">Cytoplasm</keyword>
<keyword id="KW-0255">Endonuclease</keyword>
<keyword id="KW-0378">Hydrolase</keyword>
<keyword id="KW-0464">Manganese</keyword>
<keyword id="KW-0479">Metal-binding</keyword>
<keyword id="KW-0540">Nuclease</keyword>
<feature type="chain" id="PRO_0000334924" description="Ribonuclease HII">
    <location>
        <begin position="1"/>
        <end position="230"/>
    </location>
</feature>
<feature type="domain" description="RNase H type-2" evidence="2">
    <location>
        <begin position="21"/>
        <end position="212"/>
    </location>
</feature>
<feature type="binding site" evidence="1">
    <location>
        <position position="27"/>
    </location>
    <ligand>
        <name>a divalent metal cation</name>
        <dbReference type="ChEBI" id="CHEBI:60240"/>
    </ligand>
</feature>
<feature type="binding site" evidence="1">
    <location>
        <position position="28"/>
    </location>
    <ligand>
        <name>a divalent metal cation</name>
        <dbReference type="ChEBI" id="CHEBI:60240"/>
    </ligand>
</feature>
<feature type="binding site" evidence="1">
    <location>
        <position position="121"/>
    </location>
    <ligand>
        <name>a divalent metal cation</name>
        <dbReference type="ChEBI" id="CHEBI:60240"/>
    </ligand>
</feature>
<protein>
    <recommendedName>
        <fullName evidence="1">Ribonuclease HII</fullName>
        <shortName evidence="1">RNase HII</shortName>
        <ecNumber evidence="1">3.1.26.4</ecNumber>
    </recommendedName>
</protein>
<dbReference type="EC" id="3.1.26.4" evidence="1"/>
<dbReference type="EMBL" id="CP000479">
    <property type="protein sequence ID" value="ABK68212.1"/>
    <property type="molecule type" value="Genomic_DNA"/>
</dbReference>
<dbReference type="SMR" id="A0QJ41"/>
<dbReference type="KEGG" id="mav:MAV_3757"/>
<dbReference type="HOGENOM" id="CLU_036532_1_0_11"/>
<dbReference type="Proteomes" id="UP000001574">
    <property type="component" value="Chromosome"/>
</dbReference>
<dbReference type="GO" id="GO:0005737">
    <property type="term" value="C:cytoplasm"/>
    <property type="evidence" value="ECO:0007669"/>
    <property type="project" value="UniProtKB-SubCell"/>
</dbReference>
<dbReference type="GO" id="GO:0032299">
    <property type="term" value="C:ribonuclease H2 complex"/>
    <property type="evidence" value="ECO:0007669"/>
    <property type="project" value="TreeGrafter"/>
</dbReference>
<dbReference type="GO" id="GO:0030145">
    <property type="term" value="F:manganese ion binding"/>
    <property type="evidence" value="ECO:0007669"/>
    <property type="project" value="UniProtKB-UniRule"/>
</dbReference>
<dbReference type="GO" id="GO:0003723">
    <property type="term" value="F:RNA binding"/>
    <property type="evidence" value="ECO:0007669"/>
    <property type="project" value="InterPro"/>
</dbReference>
<dbReference type="GO" id="GO:0004523">
    <property type="term" value="F:RNA-DNA hybrid ribonuclease activity"/>
    <property type="evidence" value="ECO:0007669"/>
    <property type="project" value="UniProtKB-UniRule"/>
</dbReference>
<dbReference type="GO" id="GO:0043137">
    <property type="term" value="P:DNA replication, removal of RNA primer"/>
    <property type="evidence" value="ECO:0007669"/>
    <property type="project" value="TreeGrafter"/>
</dbReference>
<dbReference type="GO" id="GO:0006298">
    <property type="term" value="P:mismatch repair"/>
    <property type="evidence" value="ECO:0007669"/>
    <property type="project" value="TreeGrafter"/>
</dbReference>
<dbReference type="CDD" id="cd07182">
    <property type="entry name" value="RNase_HII_bacteria_HII_like"/>
    <property type="match status" value="1"/>
</dbReference>
<dbReference type="FunFam" id="3.30.420.10:FF:000113">
    <property type="entry name" value="Ribonuclease HII"/>
    <property type="match status" value="1"/>
</dbReference>
<dbReference type="Gene3D" id="3.30.420.10">
    <property type="entry name" value="Ribonuclease H-like superfamily/Ribonuclease H"/>
    <property type="match status" value="1"/>
</dbReference>
<dbReference type="HAMAP" id="MF_00052_B">
    <property type="entry name" value="RNase_HII_B"/>
    <property type="match status" value="1"/>
</dbReference>
<dbReference type="InterPro" id="IPR022898">
    <property type="entry name" value="RNase_HII"/>
</dbReference>
<dbReference type="InterPro" id="IPR001352">
    <property type="entry name" value="RNase_HII/HIII"/>
</dbReference>
<dbReference type="InterPro" id="IPR024567">
    <property type="entry name" value="RNase_HII/HIII_dom"/>
</dbReference>
<dbReference type="InterPro" id="IPR012337">
    <property type="entry name" value="RNaseH-like_sf"/>
</dbReference>
<dbReference type="InterPro" id="IPR036397">
    <property type="entry name" value="RNaseH_sf"/>
</dbReference>
<dbReference type="NCBIfam" id="NF000595">
    <property type="entry name" value="PRK00015.1-3"/>
    <property type="match status" value="1"/>
</dbReference>
<dbReference type="NCBIfam" id="NF000598">
    <property type="entry name" value="PRK00015.2-2"/>
    <property type="match status" value="1"/>
</dbReference>
<dbReference type="NCBIfam" id="NF000600">
    <property type="entry name" value="PRK00015.2-4"/>
    <property type="match status" value="1"/>
</dbReference>
<dbReference type="PANTHER" id="PTHR10954">
    <property type="entry name" value="RIBONUCLEASE H2 SUBUNIT A"/>
    <property type="match status" value="1"/>
</dbReference>
<dbReference type="PANTHER" id="PTHR10954:SF18">
    <property type="entry name" value="RIBONUCLEASE HII"/>
    <property type="match status" value="1"/>
</dbReference>
<dbReference type="Pfam" id="PF01351">
    <property type="entry name" value="RNase_HII"/>
    <property type="match status" value="1"/>
</dbReference>
<dbReference type="SUPFAM" id="SSF53098">
    <property type="entry name" value="Ribonuclease H-like"/>
    <property type="match status" value="1"/>
</dbReference>
<dbReference type="PROSITE" id="PS51975">
    <property type="entry name" value="RNASE_H_2"/>
    <property type="match status" value="1"/>
</dbReference>
<organism>
    <name type="scientific">Mycobacterium avium (strain 104)</name>
    <dbReference type="NCBI Taxonomy" id="243243"/>
    <lineage>
        <taxon>Bacteria</taxon>
        <taxon>Bacillati</taxon>
        <taxon>Actinomycetota</taxon>
        <taxon>Actinomycetes</taxon>
        <taxon>Mycobacteriales</taxon>
        <taxon>Mycobacteriaceae</taxon>
        <taxon>Mycobacterium</taxon>
        <taxon>Mycobacterium avium complex (MAC)</taxon>
    </lineage>
</organism>
<sequence length="230" mass="24217">MIRKSSGLRTLESALYRSGLGPVAGVDEVGRGACAGPLVVAACVLGPGKLESLAALDDSKKLTESVRERLFPVIRRYALAYHVVFIPPAEVDRRGVHVANIEGMRRAVAGLSLRPGYVLSDGFRVPGLAVPSLPVIGGDAVAACIAAASVLAKVSRDRLMVAMDAEHPGYGFADHKGYSTPAHSAALARLGPCPQHRHSFINVRRVANGSGGRVVADCKPDLPLQRDEGR</sequence>
<reference key="1">
    <citation type="submission" date="2006-10" db="EMBL/GenBank/DDBJ databases">
        <authorList>
            <person name="Fleischmann R.D."/>
            <person name="Dodson R.J."/>
            <person name="Haft D.H."/>
            <person name="Merkel J.S."/>
            <person name="Nelson W.C."/>
            <person name="Fraser C.M."/>
        </authorList>
    </citation>
    <scope>NUCLEOTIDE SEQUENCE [LARGE SCALE GENOMIC DNA]</scope>
    <source>
        <strain>104</strain>
    </source>
</reference>
<name>RNH2_MYCA1</name>
<accession>A0QJ41</accession>